<sequence length="273" mass="28094">MSTPRIAFIGAGNMAASLIGGLRAQGVPAAQIRASDPGAEQRAKIAGEFAIDVVESNAEAVADADVVVLSVKPQAMKAVCQALAPALKPEQLIVSIAAGIPCASLEAWLGQPRPVVRCMPNTPALLRQGASGLYANAQVSAAQCEQAGQLLSAVGIALWLDDEAQIDAVTAVSGSGPAYFFLLMQAMTDAGEKLGLSRETASRLTLQTALGAAQMALSSEVEPAELRRRVTSPNGTTEAAIKSFQANGFEALVEQALNAASQRSAELAEQLGQ</sequence>
<gene>
    <name evidence="1 3" type="primary">proC</name>
    <name type="ordered locus">PA0393</name>
</gene>
<feature type="initiator methionine" description="Removed" evidence="2">
    <location>
        <position position="1"/>
    </location>
</feature>
<feature type="chain" id="PRO_0000187296" description="Pyrroline-5-carboxylate reductase">
    <location>
        <begin position="2"/>
        <end position="273"/>
    </location>
</feature>
<accession>P22008</accession>
<evidence type="ECO:0000255" key="1">
    <source>
        <dbReference type="HAMAP-Rule" id="MF_01925"/>
    </source>
</evidence>
<evidence type="ECO:0000269" key="2">
    <source>
    </source>
</evidence>
<evidence type="ECO:0000303" key="3">
    <source>
    </source>
</evidence>
<proteinExistence type="evidence at protein level"/>
<keyword id="KW-0028">Amino-acid biosynthesis</keyword>
<keyword id="KW-0963">Cytoplasm</keyword>
<keyword id="KW-0903">Direct protein sequencing</keyword>
<keyword id="KW-0521">NADP</keyword>
<keyword id="KW-0560">Oxidoreductase</keyword>
<keyword id="KW-0641">Proline biosynthesis</keyword>
<keyword id="KW-1185">Reference proteome</keyword>
<protein>
    <recommendedName>
        <fullName evidence="1">Pyrroline-5-carboxylate reductase</fullName>
        <shortName evidence="1 3">P5C reductase</shortName>
        <shortName evidence="1">P5CR</shortName>
        <ecNumber evidence="1 2">1.5.1.2</ecNumber>
    </recommendedName>
    <alternativeName>
        <fullName evidence="1">PCA reductase</fullName>
    </alternativeName>
</protein>
<dbReference type="EC" id="1.5.1.2" evidence="1 2"/>
<dbReference type="EMBL" id="M33557">
    <property type="protein sequence ID" value="AAA25975.1"/>
    <property type="molecule type" value="Genomic_DNA"/>
</dbReference>
<dbReference type="EMBL" id="AE004091">
    <property type="protein sequence ID" value="AAG03782.1"/>
    <property type="molecule type" value="Genomic_DNA"/>
</dbReference>
<dbReference type="EMBL" id="M55524">
    <property type="protein sequence ID" value="AAA25958.1"/>
    <property type="molecule type" value="Genomic_DNA"/>
</dbReference>
<dbReference type="PIR" id="JQ0418">
    <property type="entry name" value="JQ0418"/>
</dbReference>
<dbReference type="RefSeq" id="NP_249084.1">
    <property type="nucleotide sequence ID" value="NC_002516.2"/>
</dbReference>
<dbReference type="RefSeq" id="WP_003114890.1">
    <property type="nucleotide sequence ID" value="NZ_QZGE01000016.1"/>
</dbReference>
<dbReference type="SMR" id="P22008"/>
<dbReference type="FunCoup" id="P22008">
    <property type="interactions" value="610"/>
</dbReference>
<dbReference type="STRING" id="208964.PA0393"/>
<dbReference type="PaxDb" id="208964-PA0393"/>
<dbReference type="GeneID" id="878413"/>
<dbReference type="KEGG" id="pae:PA0393"/>
<dbReference type="PATRIC" id="fig|208964.12.peg.414"/>
<dbReference type="PseudoCAP" id="PA0393"/>
<dbReference type="HOGENOM" id="CLU_042344_0_1_6"/>
<dbReference type="InParanoid" id="P22008"/>
<dbReference type="OrthoDB" id="9805754at2"/>
<dbReference type="PhylomeDB" id="P22008"/>
<dbReference type="BioCyc" id="PAER208964:G1FZ6-397-MONOMER"/>
<dbReference type="SABIO-RK" id="P22008"/>
<dbReference type="UniPathway" id="UPA00098">
    <property type="reaction ID" value="UER00361"/>
</dbReference>
<dbReference type="Proteomes" id="UP000002438">
    <property type="component" value="Chromosome"/>
</dbReference>
<dbReference type="GO" id="GO:0005737">
    <property type="term" value="C:cytoplasm"/>
    <property type="evidence" value="ECO:0007669"/>
    <property type="project" value="UniProtKB-SubCell"/>
</dbReference>
<dbReference type="GO" id="GO:0004735">
    <property type="term" value="F:pyrroline-5-carboxylate reductase activity"/>
    <property type="evidence" value="ECO:0000318"/>
    <property type="project" value="GO_Central"/>
</dbReference>
<dbReference type="GO" id="GO:0055129">
    <property type="term" value="P:L-proline biosynthetic process"/>
    <property type="evidence" value="ECO:0000318"/>
    <property type="project" value="GO_Central"/>
</dbReference>
<dbReference type="GO" id="GO:0006561">
    <property type="term" value="P:proline biosynthetic process"/>
    <property type="evidence" value="ECO:0000304"/>
    <property type="project" value="PseudoCAP"/>
</dbReference>
<dbReference type="FunFam" id="1.10.3730.10:FF:000001">
    <property type="entry name" value="Pyrroline-5-carboxylate reductase"/>
    <property type="match status" value="1"/>
</dbReference>
<dbReference type="FunFam" id="3.40.50.720:FF:000105">
    <property type="entry name" value="Pyrroline-5-carboxylate reductase"/>
    <property type="match status" value="1"/>
</dbReference>
<dbReference type="Gene3D" id="3.40.50.720">
    <property type="entry name" value="NAD(P)-binding Rossmann-like Domain"/>
    <property type="match status" value="1"/>
</dbReference>
<dbReference type="Gene3D" id="1.10.3730.10">
    <property type="entry name" value="ProC C-terminal domain-like"/>
    <property type="match status" value="1"/>
</dbReference>
<dbReference type="HAMAP" id="MF_01925">
    <property type="entry name" value="P5C_reductase"/>
    <property type="match status" value="1"/>
</dbReference>
<dbReference type="InterPro" id="IPR008927">
    <property type="entry name" value="6-PGluconate_DH-like_C_sf"/>
</dbReference>
<dbReference type="InterPro" id="IPR036291">
    <property type="entry name" value="NAD(P)-bd_dom_sf"/>
</dbReference>
<dbReference type="InterPro" id="IPR028939">
    <property type="entry name" value="P5C_Rdtase_cat_N"/>
</dbReference>
<dbReference type="InterPro" id="IPR053790">
    <property type="entry name" value="P5CR-like_CS"/>
</dbReference>
<dbReference type="InterPro" id="IPR029036">
    <property type="entry name" value="P5CR_dimer"/>
</dbReference>
<dbReference type="InterPro" id="IPR000304">
    <property type="entry name" value="Pyrroline-COOH_reductase"/>
</dbReference>
<dbReference type="NCBIfam" id="TIGR00112">
    <property type="entry name" value="proC"/>
    <property type="match status" value="1"/>
</dbReference>
<dbReference type="PANTHER" id="PTHR11645">
    <property type="entry name" value="PYRROLINE-5-CARBOXYLATE REDUCTASE"/>
    <property type="match status" value="1"/>
</dbReference>
<dbReference type="PANTHER" id="PTHR11645:SF0">
    <property type="entry name" value="PYRROLINE-5-CARBOXYLATE REDUCTASE 3"/>
    <property type="match status" value="1"/>
</dbReference>
<dbReference type="Pfam" id="PF03807">
    <property type="entry name" value="F420_oxidored"/>
    <property type="match status" value="1"/>
</dbReference>
<dbReference type="Pfam" id="PF14748">
    <property type="entry name" value="P5CR_dimer"/>
    <property type="match status" value="1"/>
</dbReference>
<dbReference type="PIRSF" id="PIRSF000193">
    <property type="entry name" value="Pyrrol-5-carb_rd"/>
    <property type="match status" value="1"/>
</dbReference>
<dbReference type="SUPFAM" id="SSF48179">
    <property type="entry name" value="6-phosphogluconate dehydrogenase C-terminal domain-like"/>
    <property type="match status" value="1"/>
</dbReference>
<dbReference type="SUPFAM" id="SSF51735">
    <property type="entry name" value="NAD(P)-binding Rossmann-fold domains"/>
    <property type="match status" value="1"/>
</dbReference>
<dbReference type="PROSITE" id="PS00521">
    <property type="entry name" value="P5CR"/>
    <property type="match status" value="1"/>
</dbReference>
<name>P5CR_PSEAE</name>
<organism>
    <name type="scientific">Pseudomonas aeruginosa (strain ATCC 15692 / DSM 22644 / CIP 104116 / JCM 14847 / LMG 12228 / 1C / PRS 101 / PAO1)</name>
    <dbReference type="NCBI Taxonomy" id="208964"/>
    <lineage>
        <taxon>Bacteria</taxon>
        <taxon>Pseudomonadati</taxon>
        <taxon>Pseudomonadota</taxon>
        <taxon>Gammaproteobacteria</taxon>
        <taxon>Pseudomonadales</taxon>
        <taxon>Pseudomonadaceae</taxon>
        <taxon>Pseudomonas</taxon>
    </lineage>
</organism>
<comment type="function">
    <text evidence="1 2">Catalyzes the reduction of 1-pyrroline-5-carboxylate (PCA) to L-proline.</text>
</comment>
<comment type="catalytic activity">
    <reaction evidence="1 2">
        <text>L-proline + NADP(+) = (S)-1-pyrroline-5-carboxylate + NADPH + 2 H(+)</text>
        <dbReference type="Rhea" id="RHEA:14109"/>
        <dbReference type="ChEBI" id="CHEBI:15378"/>
        <dbReference type="ChEBI" id="CHEBI:17388"/>
        <dbReference type="ChEBI" id="CHEBI:57783"/>
        <dbReference type="ChEBI" id="CHEBI:58349"/>
        <dbReference type="ChEBI" id="CHEBI:60039"/>
        <dbReference type="EC" id="1.5.1.2"/>
    </reaction>
</comment>
<comment type="catalytic activity">
    <reaction evidence="1 2">
        <text>L-proline + NAD(+) = (S)-1-pyrroline-5-carboxylate + NADH + 2 H(+)</text>
        <dbReference type="Rhea" id="RHEA:14105"/>
        <dbReference type="ChEBI" id="CHEBI:15378"/>
        <dbReference type="ChEBI" id="CHEBI:17388"/>
        <dbReference type="ChEBI" id="CHEBI:57540"/>
        <dbReference type="ChEBI" id="CHEBI:57945"/>
        <dbReference type="ChEBI" id="CHEBI:60039"/>
        <dbReference type="EC" id="1.5.1.2"/>
    </reaction>
</comment>
<comment type="pathway">
    <text evidence="1">Amino-acid biosynthesis; L-proline biosynthesis; L-proline from L-glutamate 5-semialdehyde: step 1/1.</text>
</comment>
<comment type="subcellular location">
    <subcellularLocation>
        <location evidence="1">Cytoplasm</location>
    </subcellularLocation>
</comment>
<comment type="similarity">
    <text evidence="1">Belongs to the pyrroline-5-carboxylate reductase family.</text>
</comment>
<reference key="1">
    <citation type="journal article" date="1990" name="Gene">
        <title>Comparison of proC and other housekeeping genes of Pseudomonas aeruginosa with their counterparts in Escherichia coli.</title>
        <authorList>
            <person name="Savioz A."/>
            <person name="Jeenes D.J."/>
            <person name="Kocher H.P."/>
            <person name="Haas D."/>
        </authorList>
    </citation>
    <scope>NUCLEOTIDE SEQUENCE [GENOMIC DNA]</scope>
    <scope>PROTEIN SEQUENCE OF 2-13</scope>
    <scope>FUNCTION</scope>
    <scope>CATALYTIC ACTIVITY</scope>
    <source>
        <strain>ATCC 15692 / DSM 22644 / CIP 104116 / JCM 14847 / LMG 12228 / 1C / PRS 101 / PAO1</strain>
    </source>
</reference>
<reference key="2">
    <citation type="journal article" date="2000" name="Nature">
        <title>Complete genome sequence of Pseudomonas aeruginosa PAO1, an opportunistic pathogen.</title>
        <authorList>
            <person name="Stover C.K."/>
            <person name="Pham X.-Q.T."/>
            <person name="Erwin A.L."/>
            <person name="Mizoguchi S.D."/>
            <person name="Warrener P."/>
            <person name="Hickey M.J."/>
            <person name="Brinkman F.S.L."/>
            <person name="Hufnagle W.O."/>
            <person name="Kowalik D.J."/>
            <person name="Lagrou M."/>
            <person name="Garber R.L."/>
            <person name="Goltry L."/>
            <person name="Tolentino E."/>
            <person name="Westbrock-Wadman S."/>
            <person name="Yuan Y."/>
            <person name="Brody L.L."/>
            <person name="Coulter S.N."/>
            <person name="Folger K.R."/>
            <person name="Kas A."/>
            <person name="Larbig K."/>
            <person name="Lim R.M."/>
            <person name="Smith K.A."/>
            <person name="Spencer D.H."/>
            <person name="Wong G.K.-S."/>
            <person name="Wu Z."/>
            <person name="Paulsen I.T."/>
            <person name="Reizer J."/>
            <person name="Saier M.H. Jr."/>
            <person name="Hancock R.E.W."/>
            <person name="Lory S."/>
            <person name="Olson M.V."/>
        </authorList>
    </citation>
    <scope>NUCLEOTIDE SEQUENCE [LARGE SCALE GENOMIC DNA]</scope>
    <source>
        <strain>ATCC 15692 / DSM 22644 / CIP 104116 / JCM 14847 / LMG 12228 / 1C / PRS 101 / PAO1</strain>
    </source>
</reference>
<reference key="3">
    <citation type="journal article" date="1991" name="Gene">
        <title>Characterisation of a Pseudomonas aeruginosa twitching motility gene and evidence for a specialised protein export system widespread in eubacteria.</title>
        <authorList>
            <person name="Whitchurch C.B."/>
            <person name="Hobbs M."/>
            <person name="Livingston S.P."/>
            <person name="Krishnapillai V."/>
            <person name="Mattick J.S."/>
        </authorList>
    </citation>
    <scope>NUCLEOTIDE SEQUENCE [GENOMIC DNA] OF 1-7</scope>
    <source>
        <strain>ATCC 15692 / DSM 22644 / CIP 104116 / JCM 14847 / LMG 12228 / 1C / PRS 101 / PAO1</strain>
    </source>
</reference>